<organism>
    <name type="scientific">Escherichia coli O139:H28 (strain E24377A / ETEC)</name>
    <dbReference type="NCBI Taxonomy" id="331111"/>
    <lineage>
        <taxon>Bacteria</taxon>
        <taxon>Pseudomonadati</taxon>
        <taxon>Pseudomonadota</taxon>
        <taxon>Gammaproteobacteria</taxon>
        <taxon>Enterobacterales</taxon>
        <taxon>Enterobacteriaceae</taxon>
        <taxon>Escherichia</taxon>
    </lineage>
</organism>
<feature type="chain" id="PRO_1000066913" description="Putative N-acetylmannosamine-6-phosphate 2-epimerase">
    <location>
        <begin position="1"/>
        <end position="229"/>
    </location>
</feature>
<reference key="1">
    <citation type="journal article" date="2008" name="J. Bacteriol.">
        <title>The pangenome structure of Escherichia coli: comparative genomic analysis of E. coli commensal and pathogenic isolates.</title>
        <authorList>
            <person name="Rasko D.A."/>
            <person name="Rosovitz M.J."/>
            <person name="Myers G.S.A."/>
            <person name="Mongodin E.F."/>
            <person name="Fricke W.F."/>
            <person name="Gajer P."/>
            <person name="Crabtree J."/>
            <person name="Sebaihia M."/>
            <person name="Thomson N.R."/>
            <person name="Chaudhuri R."/>
            <person name="Henderson I.R."/>
            <person name="Sperandio V."/>
            <person name="Ravel J."/>
        </authorList>
    </citation>
    <scope>NUCLEOTIDE SEQUENCE [LARGE SCALE GENOMIC DNA]</scope>
    <source>
        <strain>E24377A / ETEC</strain>
    </source>
</reference>
<gene>
    <name evidence="1" type="primary">nanE</name>
    <name type="ordered locus">EcE24377A_3705</name>
</gene>
<evidence type="ECO:0000255" key="1">
    <source>
        <dbReference type="HAMAP-Rule" id="MF_01235"/>
    </source>
</evidence>
<sequence>MSLLAQLDQKIAANGGLIVSCQPVPDSPLDKPEIVAAMALAAEQAGAVAIRIEGVANQQATRAVVSVPIIGIVKRDLEDSPVRITAYIEDVDALAQAGADIIAIDGTDRPRPVPVETLLARIHHHGLLAMTDCSTPEDGLACQKLGAEIIGTTLSGYTTPETPEEPDLALVKTLSDAGCRVIAEGRYNTPAQAADAMRHGAWAVTVGSAITRLEHICQWYNTAMKKAVL</sequence>
<dbReference type="EC" id="5.1.3.9" evidence="1"/>
<dbReference type="EMBL" id="CP000800">
    <property type="protein sequence ID" value="ABV17880.1"/>
    <property type="molecule type" value="Genomic_DNA"/>
</dbReference>
<dbReference type="RefSeq" id="WP_012139338.1">
    <property type="nucleotide sequence ID" value="NC_009801.1"/>
</dbReference>
<dbReference type="SMR" id="A7ZSB6"/>
<dbReference type="KEGG" id="ecw:EcE24377A_3705"/>
<dbReference type="HOGENOM" id="CLU_086300_0_0_6"/>
<dbReference type="UniPathway" id="UPA00629">
    <property type="reaction ID" value="UER00682"/>
</dbReference>
<dbReference type="Proteomes" id="UP000001122">
    <property type="component" value="Chromosome"/>
</dbReference>
<dbReference type="GO" id="GO:0005829">
    <property type="term" value="C:cytosol"/>
    <property type="evidence" value="ECO:0007669"/>
    <property type="project" value="TreeGrafter"/>
</dbReference>
<dbReference type="GO" id="GO:0047465">
    <property type="term" value="F:N-acylglucosamine-6-phosphate 2-epimerase activity"/>
    <property type="evidence" value="ECO:0007669"/>
    <property type="project" value="UniProtKB-EC"/>
</dbReference>
<dbReference type="GO" id="GO:0005975">
    <property type="term" value="P:carbohydrate metabolic process"/>
    <property type="evidence" value="ECO:0007669"/>
    <property type="project" value="UniProtKB-UniRule"/>
</dbReference>
<dbReference type="GO" id="GO:0006053">
    <property type="term" value="P:N-acetylmannosamine catabolic process"/>
    <property type="evidence" value="ECO:0007669"/>
    <property type="project" value="TreeGrafter"/>
</dbReference>
<dbReference type="GO" id="GO:0019262">
    <property type="term" value="P:N-acetylneuraminate catabolic process"/>
    <property type="evidence" value="ECO:0007669"/>
    <property type="project" value="UniProtKB-UniRule"/>
</dbReference>
<dbReference type="CDD" id="cd04729">
    <property type="entry name" value="NanE"/>
    <property type="match status" value="1"/>
</dbReference>
<dbReference type="FunFam" id="3.20.20.70:FF:000035">
    <property type="entry name" value="Putative N-acetylmannosamine-6-phosphate 2-epimerase"/>
    <property type="match status" value="1"/>
</dbReference>
<dbReference type="Gene3D" id="3.20.20.70">
    <property type="entry name" value="Aldolase class I"/>
    <property type="match status" value="1"/>
</dbReference>
<dbReference type="HAMAP" id="MF_01235">
    <property type="entry name" value="ManNAc6P_epimer"/>
    <property type="match status" value="1"/>
</dbReference>
<dbReference type="InterPro" id="IPR013785">
    <property type="entry name" value="Aldolase_TIM"/>
</dbReference>
<dbReference type="InterPro" id="IPR007260">
    <property type="entry name" value="NanE"/>
</dbReference>
<dbReference type="InterPro" id="IPR011060">
    <property type="entry name" value="RibuloseP-bd_barrel"/>
</dbReference>
<dbReference type="NCBIfam" id="NF002231">
    <property type="entry name" value="PRK01130.1"/>
    <property type="match status" value="1"/>
</dbReference>
<dbReference type="PANTHER" id="PTHR36204">
    <property type="entry name" value="N-ACETYLMANNOSAMINE-6-PHOSPHATE 2-EPIMERASE-RELATED"/>
    <property type="match status" value="1"/>
</dbReference>
<dbReference type="PANTHER" id="PTHR36204:SF1">
    <property type="entry name" value="N-ACETYLMANNOSAMINE-6-PHOSPHATE 2-EPIMERASE-RELATED"/>
    <property type="match status" value="1"/>
</dbReference>
<dbReference type="Pfam" id="PF04131">
    <property type="entry name" value="NanE"/>
    <property type="match status" value="1"/>
</dbReference>
<dbReference type="SUPFAM" id="SSF51366">
    <property type="entry name" value="Ribulose-phoshate binding barrel"/>
    <property type="match status" value="1"/>
</dbReference>
<accession>A7ZSB6</accession>
<protein>
    <recommendedName>
        <fullName evidence="1">Putative N-acetylmannosamine-6-phosphate 2-epimerase</fullName>
        <ecNumber evidence="1">5.1.3.9</ecNumber>
    </recommendedName>
    <alternativeName>
        <fullName evidence="1">ManNAc-6-P epimerase</fullName>
    </alternativeName>
</protein>
<comment type="function">
    <text evidence="1">Converts N-acetylmannosamine-6-phosphate (ManNAc-6-P) to N-acetylglucosamine-6-phosphate (GlcNAc-6-P).</text>
</comment>
<comment type="catalytic activity">
    <reaction evidence="1">
        <text>an N-acyl-D-glucosamine 6-phosphate = an N-acyl-D-mannosamine 6-phosphate</text>
        <dbReference type="Rhea" id="RHEA:23932"/>
        <dbReference type="ChEBI" id="CHEBI:57599"/>
        <dbReference type="ChEBI" id="CHEBI:57666"/>
        <dbReference type="EC" id="5.1.3.9"/>
    </reaction>
</comment>
<comment type="pathway">
    <text evidence="1">Amino-sugar metabolism; N-acetylneuraminate degradation; D-fructose 6-phosphate from N-acetylneuraminate: step 3/5.</text>
</comment>
<comment type="similarity">
    <text evidence="1">Belongs to the NanE family.</text>
</comment>
<proteinExistence type="inferred from homology"/>
<name>NANE_ECO24</name>
<keyword id="KW-0119">Carbohydrate metabolism</keyword>
<keyword id="KW-0413">Isomerase</keyword>
<keyword id="KW-1185">Reference proteome</keyword>